<keyword id="KW-1003">Cell membrane</keyword>
<keyword id="KW-0472">Membrane</keyword>
<keyword id="KW-0812">Transmembrane</keyword>
<keyword id="KW-1133">Transmembrane helix</keyword>
<accession>Q8K9N7</accession>
<accession>O69228</accession>
<proteinExistence type="inferred from homology"/>
<organism>
    <name type="scientific">Buchnera aphidicola subsp. Schizaphis graminum (strain Sg)</name>
    <dbReference type="NCBI Taxonomy" id="198804"/>
    <lineage>
        <taxon>Bacteria</taxon>
        <taxon>Pseudomonadati</taxon>
        <taxon>Pseudomonadota</taxon>
        <taxon>Gammaproteobacteria</taxon>
        <taxon>Enterobacterales</taxon>
        <taxon>Erwiniaceae</taxon>
        <taxon>Buchnera</taxon>
    </lineage>
</organism>
<protein>
    <recommendedName>
        <fullName>Uncharacterized membrane protein BUsg_286</fullName>
    </recommendedName>
</protein>
<comment type="subcellular location">
    <subcellularLocation>
        <location evidence="2">Cell membrane</location>
        <topology evidence="2">Multi-pass membrane protein</topology>
    </subcellularLocation>
</comment>
<comment type="similarity">
    <text evidence="2">Belongs to the ABC-4 integral membrane protein family. LolC/E subfamily.</text>
</comment>
<comment type="sequence caution" evidence="2">
    <conflict type="frameshift">
        <sequence resource="EMBL-CDS" id="AAC05799"/>
    </conflict>
</comment>
<dbReference type="EMBL" id="U11045">
    <property type="protein sequence ID" value="AAC05799.1"/>
    <property type="status" value="ALT_FRAME"/>
    <property type="molecule type" value="Genomic_DNA"/>
</dbReference>
<dbReference type="EMBL" id="AE013218">
    <property type="protein sequence ID" value="AAM67842.1"/>
    <property type="molecule type" value="Genomic_DNA"/>
</dbReference>
<dbReference type="RefSeq" id="WP_011053809.1">
    <property type="nucleotide sequence ID" value="NC_004061.1"/>
</dbReference>
<dbReference type="SMR" id="Q8K9N7"/>
<dbReference type="STRING" id="198804.BUsg_286"/>
<dbReference type="GeneID" id="93003756"/>
<dbReference type="KEGG" id="bas:BUsg_286"/>
<dbReference type="eggNOG" id="COG4591">
    <property type="taxonomic scope" value="Bacteria"/>
</dbReference>
<dbReference type="HOGENOM" id="CLU_000604_8_1_6"/>
<dbReference type="Proteomes" id="UP000000416">
    <property type="component" value="Chromosome"/>
</dbReference>
<dbReference type="GO" id="GO:0098797">
    <property type="term" value="C:plasma membrane protein complex"/>
    <property type="evidence" value="ECO:0007669"/>
    <property type="project" value="TreeGrafter"/>
</dbReference>
<dbReference type="GO" id="GO:0044874">
    <property type="term" value="P:lipoprotein localization to outer membrane"/>
    <property type="evidence" value="ECO:0007669"/>
    <property type="project" value="TreeGrafter"/>
</dbReference>
<dbReference type="InterPro" id="IPR003838">
    <property type="entry name" value="ABC3_permease_C"/>
</dbReference>
<dbReference type="InterPro" id="IPR051447">
    <property type="entry name" value="Lipoprotein-release_system"/>
</dbReference>
<dbReference type="PANTHER" id="PTHR30489">
    <property type="entry name" value="LIPOPROTEIN-RELEASING SYSTEM TRANSMEMBRANE PROTEIN LOLE"/>
    <property type="match status" value="1"/>
</dbReference>
<dbReference type="PANTHER" id="PTHR30489:SF0">
    <property type="entry name" value="LIPOPROTEIN-RELEASING SYSTEM TRANSMEMBRANE PROTEIN LOLE"/>
    <property type="match status" value="1"/>
</dbReference>
<dbReference type="Pfam" id="PF02687">
    <property type="entry name" value="FtsX"/>
    <property type="match status" value="1"/>
</dbReference>
<name>Y286_BUCAP</name>
<feature type="chain" id="PRO_0000201820" description="Uncharacterized membrane protein BUsg_286">
    <location>
        <begin position="1"/>
        <end position="413"/>
    </location>
</feature>
<feature type="transmembrane region" description="Helical" evidence="1">
    <location>
        <begin position="22"/>
        <end position="42"/>
    </location>
</feature>
<feature type="transmembrane region" description="Helical" evidence="1">
    <location>
        <begin position="270"/>
        <end position="290"/>
    </location>
</feature>
<feature type="transmembrane region" description="Helical" evidence="1">
    <location>
        <begin position="312"/>
        <end position="332"/>
    </location>
</feature>
<feature type="transmembrane region" description="Helical" evidence="1">
    <location>
        <begin position="379"/>
        <end position="399"/>
    </location>
</feature>
<sequence length="413" mass="48498">MNFLPFLIAKRLYHRNNKNHAVLLVSILSKIGISISIFTLILSFSALNGFQILIKKNILSSLPHGIIELTNTSAFTWKDITKKLESLPEVIYSEPYVLMNSVLLKNDKMRFINIKSFKNIKYIKKYFSFQKKLYNFSKLKKIYNNEIIISSDLAKYFSLKEGDCINLIILNKKISFDKTQIQSFSFKVKSIFHSNGISNSNIGLIPFIFFQKFFNIKNNINKIELYMSDPFQADKIILKIAKKIKTPLFFYNWMYSYKYIYHDIKIIKTIIYVTLFLIIIISCFSVISICLTSISKKTKDIAILRSIGANNILIQLIFFYYGMRFIIIGNLIGLLTGIITVLNFKKIMFFLEKHFEENWFLKNVYYKNFLLLQINFFDLIIIFISTLTIGIVANWYPIYYASKINPNKILKEY</sequence>
<reference key="1">
    <citation type="journal article" date="1995" name="Curr. Microbiol.">
        <title>Buchnera aphidicola (aphid-endosymbiont) glyceraldehyde-3-phosphate dehydrogenase: molecular cloning and sequence analysis.</title>
        <authorList>
            <person name="Kolibachuk D."/>
            <person name="Baumann P."/>
        </authorList>
    </citation>
    <scope>NUCLEOTIDE SEQUENCE [GENOMIC DNA]</scope>
</reference>
<reference key="2">
    <citation type="journal article" date="2002" name="Science">
        <title>50 million years of genomic stasis in endosymbiotic bacteria.</title>
        <authorList>
            <person name="Tamas I."/>
            <person name="Klasson L."/>
            <person name="Canbaeck B."/>
            <person name="Naeslund A.K."/>
            <person name="Eriksson A.-S."/>
            <person name="Wernegreen J.J."/>
            <person name="Sandstroem J.P."/>
            <person name="Moran N.A."/>
            <person name="Andersson S.G.E."/>
        </authorList>
    </citation>
    <scope>NUCLEOTIDE SEQUENCE [LARGE SCALE GENOMIC DNA]</scope>
    <source>
        <strain>Sg</strain>
    </source>
</reference>
<evidence type="ECO:0000255" key="1"/>
<evidence type="ECO:0000305" key="2"/>
<gene>
    <name type="ordered locus">BUsg_286</name>
</gene>